<organism>
    <name type="scientific">Escherichia coli O6:H1 (strain CFT073 / ATCC 700928 / UPEC)</name>
    <dbReference type="NCBI Taxonomy" id="199310"/>
    <lineage>
        <taxon>Bacteria</taxon>
        <taxon>Pseudomonadati</taxon>
        <taxon>Pseudomonadota</taxon>
        <taxon>Gammaproteobacteria</taxon>
        <taxon>Enterobacterales</taxon>
        <taxon>Enterobacteriaceae</taxon>
        <taxon>Escherichia</taxon>
    </lineage>
</organism>
<protein>
    <recommendedName>
        <fullName>Uncharacterized HTH-type transcriptional regulator YiaG</fullName>
    </recommendedName>
</protein>
<name>YIAG_ECOL6</name>
<keyword id="KW-0238">DNA-binding</keyword>
<keyword id="KW-1185">Reference proteome</keyword>
<keyword id="KW-0804">Transcription</keyword>
<keyword id="KW-0805">Transcription regulation</keyword>
<gene>
    <name type="primary">yiaG</name>
    <name type="ordered locus">c4375</name>
</gene>
<dbReference type="EMBL" id="AE014075">
    <property type="protein sequence ID" value="AAN82811.1"/>
    <property type="molecule type" value="Genomic_DNA"/>
</dbReference>
<dbReference type="RefSeq" id="WP_000455798.1">
    <property type="nucleotide sequence ID" value="NZ_CP051263.1"/>
</dbReference>
<dbReference type="SMR" id="P0A9V6"/>
<dbReference type="STRING" id="199310.c4375"/>
<dbReference type="KEGG" id="ecc:c4375"/>
<dbReference type="eggNOG" id="COG2944">
    <property type="taxonomic scope" value="Bacteria"/>
</dbReference>
<dbReference type="HOGENOM" id="CLU_144725_2_0_6"/>
<dbReference type="BioCyc" id="ECOL199310:C4375-MONOMER"/>
<dbReference type="Proteomes" id="UP000001410">
    <property type="component" value="Chromosome"/>
</dbReference>
<dbReference type="GO" id="GO:0003677">
    <property type="term" value="F:DNA binding"/>
    <property type="evidence" value="ECO:0007669"/>
    <property type="project" value="UniProtKB-KW"/>
</dbReference>
<dbReference type="CDD" id="cd00093">
    <property type="entry name" value="HTH_XRE"/>
    <property type="match status" value="1"/>
</dbReference>
<dbReference type="Gene3D" id="1.10.260.40">
    <property type="entry name" value="lambda repressor-like DNA-binding domains"/>
    <property type="match status" value="1"/>
</dbReference>
<dbReference type="InterPro" id="IPR001387">
    <property type="entry name" value="Cro/C1-type_HTH"/>
</dbReference>
<dbReference type="InterPro" id="IPR052359">
    <property type="entry name" value="HTH-type_reg/antitoxin"/>
</dbReference>
<dbReference type="InterPro" id="IPR010982">
    <property type="entry name" value="Lambda_DNA-bd_dom_sf"/>
</dbReference>
<dbReference type="NCBIfam" id="NF007481">
    <property type="entry name" value="PRK10072.1"/>
    <property type="match status" value="1"/>
</dbReference>
<dbReference type="PANTHER" id="PTHR36511">
    <property type="entry name" value="MERR FAMILY BACTERIAL REGULATORY PROTEIN"/>
    <property type="match status" value="1"/>
</dbReference>
<dbReference type="PANTHER" id="PTHR36511:SF6">
    <property type="entry name" value="TRANSCRIPTIONAL REGULATOR"/>
    <property type="match status" value="1"/>
</dbReference>
<dbReference type="Pfam" id="PF01381">
    <property type="entry name" value="HTH_3"/>
    <property type="match status" value="1"/>
</dbReference>
<dbReference type="SMART" id="SM00530">
    <property type="entry name" value="HTH_XRE"/>
    <property type="match status" value="1"/>
</dbReference>
<dbReference type="SUPFAM" id="SSF47413">
    <property type="entry name" value="lambda repressor-like DNA-binding domains"/>
    <property type="match status" value="1"/>
</dbReference>
<dbReference type="PROSITE" id="PS50943">
    <property type="entry name" value="HTH_CROC1"/>
    <property type="match status" value="1"/>
</dbReference>
<proteinExistence type="predicted"/>
<reference key="1">
    <citation type="journal article" date="2002" name="Proc. Natl. Acad. Sci. U.S.A.">
        <title>Extensive mosaic structure revealed by the complete genome sequence of uropathogenic Escherichia coli.</title>
        <authorList>
            <person name="Welch R.A."/>
            <person name="Burland V."/>
            <person name="Plunkett G. III"/>
            <person name="Redford P."/>
            <person name="Roesch P."/>
            <person name="Rasko D."/>
            <person name="Buckles E.L."/>
            <person name="Liou S.-R."/>
            <person name="Boutin A."/>
            <person name="Hackett J."/>
            <person name="Stroud D."/>
            <person name="Mayhew G.F."/>
            <person name="Rose D.J."/>
            <person name="Zhou S."/>
            <person name="Schwartz D.C."/>
            <person name="Perna N.T."/>
            <person name="Mobley H.L.T."/>
            <person name="Donnenberg M.S."/>
            <person name="Blattner F.R."/>
        </authorList>
    </citation>
    <scope>NUCLEOTIDE SEQUENCE [LARGE SCALE GENOMIC DNA]</scope>
    <source>
        <strain>CFT073 / ATCC 700928 / UPEC</strain>
    </source>
</reference>
<accession>P0A9V6</accession>
<accession>P37668</accession>
<feature type="chain" id="PRO_0000149768" description="Uncharacterized HTH-type transcriptional regulator YiaG">
    <location>
        <begin position="1"/>
        <end position="96"/>
    </location>
</feature>
<feature type="domain" description="HTH cro/C1-type" evidence="1">
    <location>
        <begin position="38"/>
        <end position="91"/>
    </location>
</feature>
<feature type="DNA-binding region" description="H-T-H motif" evidence="1">
    <location>
        <begin position="49"/>
        <end position="68"/>
    </location>
</feature>
<sequence length="96" mass="11033">MEYKDPMHELLSSLEQIVFKDETQKITLTHRTTSCTEIEQLRKGTGLKIDDFARVLGVSVAMVKEWESRRVKPSSAELKLMRLIQANPALSKQLME</sequence>
<evidence type="ECO:0000255" key="1">
    <source>
        <dbReference type="PROSITE-ProRule" id="PRU00257"/>
    </source>
</evidence>